<keyword id="KW-0067">ATP-binding</keyword>
<keyword id="KW-0963">Cytoplasm</keyword>
<keyword id="KW-0227">DNA damage</keyword>
<keyword id="KW-0228">DNA excision</keyword>
<keyword id="KW-0234">DNA repair</keyword>
<keyword id="KW-0238">DNA-binding</keyword>
<keyword id="KW-0267">Excision nuclease</keyword>
<keyword id="KW-0479">Metal-binding</keyword>
<keyword id="KW-0547">Nucleotide-binding</keyword>
<keyword id="KW-1185">Reference proteome</keyword>
<keyword id="KW-0677">Repeat</keyword>
<keyword id="KW-0742">SOS response</keyword>
<keyword id="KW-0862">Zinc</keyword>
<keyword id="KW-0863">Zinc-finger</keyword>
<dbReference type="EMBL" id="AE000520">
    <property type="protein sequence ID" value="AAC65502.1"/>
    <property type="molecule type" value="Genomic_DNA"/>
</dbReference>
<dbReference type="PIR" id="A71315">
    <property type="entry name" value="A71315"/>
</dbReference>
<dbReference type="RefSeq" id="WP_010881963.1">
    <property type="nucleotide sequence ID" value="NC_021490.2"/>
</dbReference>
<dbReference type="SMR" id="O83527"/>
<dbReference type="IntAct" id="O83527">
    <property type="interactions" value="7"/>
</dbReference>
<dbReference type="STRING" id="243276.TP_0514"/>
<dbReference type="EnsemblBacteria" id="AAC65502">
    <property type="protein sequence ID" value="AAC65502"/>
    <property type="gene ID" value="TP_0514"/>
</dbReference>
<dbReference type="GeneID" id="93876283"/>
<dbReference type="KEGG" id="tpa:TP_0514"/>
<dbReference type="KEGG" id="tpw:TPANIC_0514"/>
<dbReference type="eggNOG" id="COG0178">
    <property type="taxonomic scope" value="Bacteria"/>
</dbReference>
<dbReference type="HOGENOM" id="CLU_001370_0_2_12"/>
<dbReference type="OrthoDB" id="9809851at2"/>
<dbReference type="Proteomes" id="UP000000811">
    <property type="component" value="Chromosome"/>
</dbReference>
<dbReference type="GO" id="GO:0005737">
    <property type="term" value="C:cytoplasm"/>
    <property type="evidence" value="ECO:0007669"/>
    <property type="project" value="UniProtKB-SubCell"/>
</dbReference>
<dbReference type="GO" id="GO:0009380">
    <property type="term" value="C:excinuclease repair complex"/>
    <property type="evidence" value="ECO:0007669"/>
    <property type="project" value="InterPro"/>
</dbReference>
<dbReference type="GO" id="GO:0005524">
    <property type="term" value="F:ATP binding"/>
    <property type="evidence" value="ECO:0007669"/>
    <property type="project" value="UniProtKB-UniRule"/>
</dbReference>
<dbReference type="GO" id="GO:0016887">
    <property type="term" value="F:ATP hydrolysis activity"/>
    <property type="evidence" value="ECO:0007669"/>
    <property type="project" value="InterPro"/>
</dbReference>
<dbReference type="GO" id="GO:0003677">
    <property type="term" value="F:DNA binding"/>
    <property type="evidence" value="ECO:0007669"/>
    <property type="project" value="UniProtKB-UniRule"/>
</dbReference>
<dbReference type="GO" id="GO:0009381">
    <property type="term" value="F:excinuclease ABC activity"/>
    <property type="evidence" value="ECO:0007669"/>
    <property type="project" value="UniProtKB-UniRule"/>
</dbReference>
<dbReference type="GO" id="GO:0008270">
    <property type="term" value="F:zinc ion binding"/>
    <property type="evidence" value="ECO:0007669"/>
    <property type="project" value="UniProtKB-UniRule"/>
</dbReference>
<dbReference type="GO" id="GO:0006289">
    <property type="term" value="P:nucleotide-excision repair"/>
    <property type="evidence" value="ECO:0007669"/>
    <property type="project" value="UniProtKB-UniRule"/>
</dbReference>
<dbReference type="GO" id="GO:0009432">
    <property type="term" value="P:SOS response"/>
    <property type="evidence" value="ECO:0007669"/>
    <property type="project" value="UniProtKB-UniRule"/>
</dbReference>
<dbReference type="CDD" id="cd03271">
    <property type="entry name" value="ABC_UvrA_II"/>
    <property type="match status" value="1"/>
</dbReference>
<dbReference type="FunFam" id="1.20.1580.10:FF:000002">
    <property type="entry name" value="UvrABC system protein A"/>
    <property type="match status" value="1"/>
</dbReference>
<dbReference type="Gene3D" id="1.10.8.280">
    <property type="entry name" value="ABC transporter ATPase domain-like"/>
    <property type="match status" value="1"/>
</dbReference>
<dbReference type="Gene3D" id="1.20.1580.10">
    <property type="entry name" value="ABC transporter ATPase like domain"/>
    <property type="match status" value="2"/>
</dbReference>
<dbReference type="Gene3D" id="3.30.1490.20">
    <property type="entry name" value="ATP-grasp fold, A domain"/>
    <property type="match status" value="1"/>
</dbReference>
<dbReference type="Gene3D" id="3.40.50.300">
    <property type="entry name" value="P-loop containing nucleotide triphosphate hydrolases"/>
    <property type="match status" value="2"/>
</dbReference>
<dbReference type="HAMAP" id="MF_00205">
    <property type="entry name" value="UvrA"/>
    <property type="match status" value="1"/>
</dbReference>
<dbReference type="InterPro" id="IPR003439">
    <property type="entry name" value="ABC_transporter-like_ATP-bd"/>
</dbReference>
<dbReference type="InterPro" id="IPR017871">
    <property type="entry name" value="ABC_transporter-like_CS"/>
</dbReference>
<dbReference type="InterPro" id="IPR013815">
    <property type="entry name" value="ATP_grasp_subdomain_1"/>
</dbReference>
<dbReference type="InterPro" id="IPR027417">
    <property type="entry name" value="P-loop_NTPase"/>
</dbReference>
<dbReference type="InterPro" id="IPR004602">
    <property type="entry name" value="UvrA"/>
</dbReference>
<dbReference type="InterPro" id="IPR041552">
    <property type="entry name" value="UvrA_DNA-bd"/>
</dbReference>
<dbReference type="InterPro" id="IPR041102">
    <property type="entry name" value="UvrA_inter"/>
</dbReference>
<dbReference type="NCBIfam" id="NF001503">
    <property type="entry name" value="PRK00349.1"/>
    <property type="match status" value="1"/>
</dbReference>
<dbReference type="NCBIfam" id="TIGR00630">
    <property type="entry name" value="uvra"/>
    <property type="match status" value="1"/>
</dbReference>
<dbReference type="PANTHER" id="PTHR43152">
    <property type="entry name" value="UVRABC SYSTEM PROTEIN A"/>
    <property type="match status" value="1"/>
</dbReference>
<dbReference type="PANTHER" id="PTHR43152:SF3">
    <property type="entry name" value="UVRABC SYSTEM PROTEIN A"/>
    <property type="match status" value="1"/>
</dbReference>
<dbReference type="Pfam" id="PF17755">
    <property type="entry name" value="UvrA_DNA-bind"/>
    <property type="match status" value="1"/>
</dbReference>
<dbReference type="Pfam" id="PF17760">
    <property type="entry name" value="UvrA_inter"/>
    <property type="match status" value="1"/>
</dbReference>
<dbReference type="SUPFAM" id="SSF52540">
    <property type="entry name" value="P-loop containing nucleoside triphosphate hydrolases"/>
    <property type="match status" value="2"/>
</dbReference>
<dbReference type="PROSITE" id="PS00211">
    <property type="entry name" value="ABC_TRANSPORTER_1"/>
    <property type="match status" value="2"/>
</dbReference>
<dbReference type="PROSITE" id="PS50893">
    <property type="entry name" value="ABC_TRANSPORTER_2"/>
    <property type="match status" value="1"/>
</dbReference>
<organism>
    <name type="scientific">Treponema pallidum (strain Nichols)</name>
    <dbReference type="NCBI Taxonomy" id="243276"/>
    <lineage>
        <taxon>Bacteria</taxon>
        <taxon>Pseudomonadati</taxon>
        <taxon>Spirochaetota</taxon>
        <taxon>Spirochaetia</taxon>
        <taxon>Spirochaetales</taxon>
        <taxon>Treponemataceae</taxon>
        <taxon>Treponema</taxon>
    </lineage>
</organism>
<comment type="function">
    <text evidence="1">The UvrABC repair system catalyzes the recognition and processing of DNA lesions. UvrA is an ATPase and a DNA-binding protein. A damage recognition complex composed of 2 UvrA and 2 UvrB subunits scans DNA for abnormalities. When the presence of a lesion has been verified by UvrB, the UvrA molecules dissociate.</text>
</comment>
<comment type="subunit">
    <text evidence="1">Forms a heterotetramer with UvrB during the search for lesions.</text>
</comment>
<comment type="subcellular location">
    <subcellularLocation>
        <location evidence="1">Cytoplasm</location>
    </subcellularLocation>
</comment>
<comment type="similarity">
    <text evidence="1">Belongs to the ABC transporter superfamily. UvrA family.</text>
</comment>
<feature type="chain" id="PRO_0000093109" description="UvrABC system protein A">
    <location>
        <begin position="1"/>
        <end position="960"/>
    </location>
</feature>
<feature type="domain" description="ABC transporter 1" evidence="1">
    <location>
        <begin position="327"/>
        <end position="605"/>
    </location>
</feature>
<feature type="domain" description="ABC transporter 2" evidence="1">
    <location>
        <begin position="625"/>
        <end position="953"/>
    </location>
</feature>
<feature type="zinc finger region" description="C4-type" evidence="1">
    <location>
        <begin position="270"/>
        <end position="297"/>
    </location>
</feature>
<feature type="zinc finger region" description="C4-type" evidence="1">
    <location>
        <begin position="756"/>
        <end position="782"/>
    </location>
</feature>
<feature type="binding site" evidence="1">
    <location>
        <begin position="35"/>
        <end position="42"/>
    </location>
    <ligand>
        <name>ATP</name>
        <dbReference type="ChEBI" id="CHEBI:30616"/>
    </ligand>
</feature>
<feature type="binding site" evidence="1">
    <location>
        <begin position="657"/>
        <end position="664"/>
    </location>
    <ligand>
        <name>ATP</name>
        <dbReference type="ChEBI" id="CHEBI:30616"/>
    </ligand>
</feature>
<gene>
    <name evidence="1" type="primary">uvrA</name>
    <name type="ordered locus">TP_0514</name>
</gene>
<evidence type="ECO:0000255" key="1">
    <source>
        <dbReference type="HAMAP-Rule" id="MF_00205"/>
    </source>
</evidence>
<protein>
    <recommendedName>
        <fullName evidence="1">UvrABC system protein A</fullName>
        <shortName evidence="1">UvrA protein</shortName>
    </recommendedName>
    <alternativeName>
        <fullName evidence="1">Excinuclease ABC subunit A</fullName>
    </alternativeName>
</protein>
<accession>O83527</accession>
<reference key="1">
    <citation type="journal article" date="1998" name="Science">
        <title>Complete genome sequence of Treponema pallidum, the syphilis spirochete.</title>
        <authorList>
            <person name="Fraser C.M."/>
            <person name="Norris S.J."/>
            <person name="Weinstock G.M."/>
            <person name="White O."/>
            <person name="Sutton G.G."/>
            <person name="Dodson R.J."/>
            <person name="Gwinn M.L."/>
            <person name="Hickey E.K."/>
            <person name="Clayton R.A."/>
            <person name="Ketchum K.A."/>
            <person name="Sodergren E."/>
            <person name="Hardham J.M."/>
            <person name="McLeod M.P."/>
            <person name="Salzberg S.L."/>
            <person name="Peterson J.D."/>
            <person name="Khalak H.G."/>
            <person name="Richardson D.L."/>
            <person name="Howell J.K."/>
            <person name="Chidambaram M."/>
            <person name="Utterback T.R."/>
            <person name="McDonald L.A."/>
            <person name="Artiach P."/>
            <person name="Bowman C."/>
            <person name="Cotton M.D."/>
            <person name="Fujii C."/>
            <person name="Garland S.A."/>
            <person name="Hatch B."/>
            <person name="Horst K."/>
            <person name="Roberts K.M."/>
            <person name="Sandusky M."/>
            <person name="Weidman J.F."/>
            <person name="Smith H.O."/>
            <person name="Venter J.C."/>
        </authorList>
    </citation>
    <scope>NUCLEOTIDE SEQUENCE [LARGE SCALE GENOMIC DNA]</scope>
    <source>
        <strain>Nichols</strain>
    </source>
</reference>
<proteinExistence type="inferred from homology"/>
<sequence>MGSAARNLCIKGAREHNLKNIDVMLPRDALVVISGLSGSGKSSLAFDTIFAEGQRRYVESLSAYARQFLGRLDKPDVDSIEGLSPAIAIEQKTTQRNPRSTVGTVTEIYDYYRLLFARIGRAHCPHCAREIKEQTVDQIVDTLMTVPSGSRIQLLAPVVRGKKGTHHKVLEAARKDGFVRARIDGALLHLHERISLDKQKKHSIDIVVDRIQLSDTVRKRLTESVETTLGYADGLLTVLVQGENSGTVSGKIETSALLPSELFFSQKNACAHCNVSVPELQPRLFSFNAPFGACPSCAGLGIMQTFDLDRIVPDQNRSFNEGAFLPFKPEHEWNRVRFAALAEKYHFSLDDPVRNLSKHALDIILHGSGSEALEFSHERKDGSRTARYIKPWPGIFSELHRRYAESCTHSQREVYERYLSVRTCEACRGMRLKPESLAVTIEKKNIHALSALSVDDSCEFFKTLHLTEVEATIAQQILKEITDRLEFLQNVGLGYLTLERAAATLSGGEAQRIRLATQIGSRLTGVLYILDEPSIGLHQRDNERLIQTLLHLRDLGNTVLVVEHDEQTLRVADYIVDLGPGAGVHGGYVVAAGSPPEVMQVQASLTGQYLAGAITLPIPAVRRTGNGNVLTVHDVHEHNLQHISVRIRLGTFTCITGVSGSGKSTLLIDVLYPALYNRVMNGRLPEGKFSSIEGTEHLDKVIYVDQSPIGRTPRSNPATYVGVFTDIRMLFSQVPEAKMRGYKPGRFSFNVPGGRCEHCKGDGVITIEMNFLPDVYITCDVCHGTRFNRETLAVFYKGKNISHVLDMTIEEARSFFSAVPPIVRKLEALCSVGLGYVRLGQSALTLSGGEAQRVKLALELSKRATGKTLYIFDEPTTGLHFADIIQLMEVVQRLVDQGNTVVMIEHNMDVIVQADCVIDLGPEGGMHGGTIVAQGSPEAVSQITESRTGWYIKEVLCKKT</sequence>
<name>UVRA_TREPA</name>